<sequence length="167" mass="19073">MRVEVGQIVNTHGIKGEIKVKSNSDFTDVRFQPGQVLTVVHNNNDLEYTVKSHRVHKGLHMLTFEGINNINDIEHLKGSSIYQERDHEDIVLEENEFYYSDIIGCTVFDDQETPIGRVINIFETGANDVWVIKGSKEYLIPYIADVVKEVDVENKKIIITPMEGLLD</sequence>
<comment type="function">
    <text evidence="1">An accessory protein needed during the final step in the assembly of 30S ribosomal subunit, possibly for assembly of the head region. Essential for efficient processing of 16S rRNA. May be needed both before and after RbfA during the maturation of 16S rRNA. It has affinity for free ribosomal 30S subunits but not for 70S ribosomes.</text>
</comment>
<comment type="subunit">
    <text evidence="1">Binds ribosomal protein uS19.</text>
</comment>
<comment type="subcellular location">
    <subcellularLocation>
        <location evidence="1">Cytoplasm</location>
    </subcellularLocation>
</comment>
<comment type="domain">
    <text evidence="1">The PRC barrel domain binds ribosomal protein uS19.</text>
</comment>
<comment type="similarity">
    <text evidence="1">Belongs to the RimM family.</text>
</comment>
<evidence type="ECO:0000255" key="1">
    <source>
        <dbReference type="HAMAP-Rule" id="MF_00014"/>
    </source>
</evidence>
<name>RIMM_STAA9</name>
<gene>
    <name evidence="1" type="primary">rimM</name>
    <name type="ordered locus">SaurJH9_1298</name>
</gene>
<keyword id="KW-0143">Chaperone</keyword>
<keyword id="KW-0963">Cytoplasm</keyword>
<keyword id="KW-0690">Ribosome biogenesis</keyword>
<keyword id="KW-0698">rRNA processing</keyword>
<feature type="chain" id="PRO_1000074045" description="Ribosome maturation factor RimM">
    <location>
        <begin position="1"/>
        <end position="167"/>
    </location>
</feature>
<feature type="domain" description="PRC barrel" evidence="1">
    <location>
        <begin position="94"/>
        <end position="165"/>
    </location>
</feature>
<protein>
    <recommendedName>
        <fullName evidence="1">Ribosome maturation factor RimM</fullName>
    </recommendedName>
</protein>
<reference key="1">
    <citation type="submission" date="2007-05" db="EMBL/GenBank/DDBJ databases">
        <title>Complete sequence of chromosome of Staphylococcus aureus subsp. aureus JH9.</title>
        <authorList>
            <consortium name="US DOE Joint Genome Institute"/>
            <person name="Copeland A."/>
            <person name="Lucas S."/>
            <person name="Lapidus A."/>
            <person name="Barry K."/>
            <person name="Detter J.C."/>
            <person name="Glavina del Rio T."/>
            <person name="Hammon N."/>
            <person name="Israni S."/>
            <person name="Pitluck S."/>
            <person name="Chain P."/>
            <person name="Malfatti S."/>
            <person name="Shin M."/>
            <person name="Vergez L."/>
            <person name="Schmutz J."/>
            <person name="Larimer F."/>
            <person name="Land M."/>
            <person name="Hauser L."/>
            <person name="Kyrpides N."/>
            <person name="Kim E."/>
            <person name="Tomasz A."/>
            <person name="Richardson P."/>
        </authorList>
    </citation>
    <scope>NUCLEOTIDE SEQUENCE [LARGE SCALE GENOMIC DNA]</scope>
    <source>
        <strain>JH9</strain>
    </source>
</reference>
<proteinExistence type="inferred from homology"/>
<accession>A5ISC4</accession>
<organism>
    <name type="scientific">Staphylococcus aureus (strain JH9)</name>
    <dbReference type="NCBI Taxonomy" id="359786"/>
    <lineage>
        <taxon>Bacteria</taxon>
        <taxon>Bacillati</taxon>
        <taxon>Bacillota</taxon>
        <taxon>Bacilli</taxon>
        <taxon>Bacillales</taxon>
        <taxon>Staphylococcaceae</taxon>
        <taxon>Staphylococcus</taxon>
    </lineage>
</organism>
<dbReference type="EMBL" id="CP000703">
    <property type="protein sequence ID" value="ABQ49097.1"/>
    <property type="molecule type" value="Genomic_DNA"/>
</dbReference>
<dbReference type="RefSeq" id="WP_001261987.1">
    <property type="nucleotide sequence ID" value="NC_009487.1"/>
</dbReference>
<dbReference type="SMR" id="A5ISC4"/>
<dbReference type="KEGG" id="saj:SaurJH9_1298"/>
<dbReference type="HOGENOM" id="CLU_077636_3_1_9"/>
<dbReference type="GO" id="GO:0005737">
    <property type="term" value="C:cytoplasm"/>
    <property type="evidence" value="ECO:0007669"/>
    <property type="project" value="UniProtKB-SubCell"/>
</dbReference>
<dbReference type="GO" id="GO:0005840">
    <property type="term" value="C:ribosome"/>
    <property type="evidence" value="ECO:0007669"/>
    <property type="project" value="InterPro"/>
</dbReference>
<dbReference type="GO" id="GO:0043022">
    <property type="term" value="F:ribosome binding"/>
    <property type="evidence" value="ECO:0007669"/>
    <property type="project" value="InterPro"/>
</dbReference>
<dbReference type="GO" id="GO:0042274">
    <property type="term" value="P:ribosomal small subunit biogenesis"/>
    <property type="evidence" value="ECO:0007669"/>
    <property type="project" value="UniProtKB-UniRule"/>
</dbReference>
<dbReference type="GO" id="GO:0006364">
    <property type="term" value="P:rRNA processing"/>
    <property type="evidence" value="ECO:0007669"/>
    <property type="project" value="UniProtKB-UniRule"/>
</dbReference>
<dbReference type="Gene3D" id="2.30.30.240">
    <property type="entry name" value="PRC-barrel domain"/>
    <property type="match status" value="1"/>
</dbReference>
<dbReference type="Gene3D" id="2.40.30.60">
    <property type="entry name" value="RimM"/>
    <property type="match status" value="1"/>
</dbReference>
<dbReference type="HAMAP" id="MF_00014">
    <property type="entry name" value="Ribosome_mat_RimM"/>
    <property type="match status" value="1"/>
</dbReference>
<dbReference type="InterPro" id="IPR011033">
    <property type="entry name" value="PRC_barrel-like_sf"/>
</dbReference>
<dbReference type="InterPro" id="IPR056792">
    <property type="entry name" value="PRC_RimM"/>
</dbReference>
<dbReference type="InterPro" id="IPR011961">
    <property type="entry name" value="RimM"/>
</dbReference>
<dbReference type="InterPro" id="IPR002676">
    <property type="entry name" value="RimM_N"/>
</dbReference>
<dbReference type="InterPro" id="IPR036976">
    <property type="entry name" value="RimM_N_sf"/>
</dbReference>
<dbReference type="InterPro" id="IPR009000">
    <property type="entry name" value="Transl_B-barrel_sf"/>
</dbReference>
<dbReference type="NCBIfam" id="TIGR02273">
    <property type="entry name" value="16S_RimM"/>
    <property type="match status" value="1"/>
</dbReference>
<dbReference type="PANTHER" id="PTHR33692">
    <property type="entry name" value="RIBOSOME MATURATION FACTOR RIMM"/>
    <property type="match status" value="1"/>
</dbReference>
<dbReference type="PANTHER" id="PTHR33692:SF1">
    <property type="entry name" value="RIBOSOME MATURATION FACTOR RIMM"/>
    <property type="match status" value="1"/>
</dbReference>
<dbReference type="Pfam" id="PF24986">
    <property type="entry name" value="PRC_RimM"/>
    <property type="match status" value="1"/>
</dbReference>
<dbReference type="Pfam" id="PF01782">
    <property type="entry name" value="RimM"/>
    <property type="match status" value="1"/>
</dbReference>
<dbReference type="SUPFAM" id="SSF50346">
    <property type="entry name" value="PRC-barrel domain"/>
    <property type="match status" value="1"/>
</dbReference>
<dbReference type="SUPFAM" id="SSF50447">
    <property type="entry name" value="Translation proteins"/>
    <property type="match status" value="1"/>
</dbReference>